<name>U74F1_ARATH</name>
<comment type="function">
    <text evidence="3 4 5 6">Possesses quercetin 7-O-glucosyltransferase and 4'-O-glucosyltransferase activities in vitro. Also active in vitro on benzoates and benzoate derivatives. Has low affinity for the tryptophan precursor anthranilate. Catalyzes the formation of anthranilate glucose ester. Is a minor source of this activity in the plant.</text>
</comment>
<comment type="catalytic activity">
    <reaction evidence="5">
        <text>a 7-O-hydroxy-flavonol + UDP-alpha-D-glucose = a flavonol 7-O-beta-D-glucoside + UDP + H(+)</text>
        <dbReference type="Rhea" id="RHEA:23164"/>
        <dbReference type="ChEBI" id="CHEBI:15378"/>
        <dbReference type="ChEBI" id="CHEBI:52144"/>
        <dbReference type="ChEBI" id="CHEBI:52267"/>
        <dbReference type="ChEBI" id="CHEBI:58223"/>
        <dbReference type="ChEBI" id="CHEBI:58885"/>
        <dbReference type="EC" id="2.4.1.237"/>
    </reaction>
</comment>
<comment type="biophysicochemical properties">
    <kinetics>
        <KM evidence="4 6">810 uM for anthranilate</KM>
        <KM evidence="4 6">850 uM for 4-aminobenzoate</KM>
    </kinetics>
</comment>
<comment type="alternative products">
    <event type="alternative splicing"/>
    <isoform>
        <id>O22820-1</id>
        <name>1</name>
        <sequence type="displayed"/>
    </isoform>
    <text>A number of isoforms are produced. According to EST sequences.</text>
</comment>
<comment type="similarity">
    <text evidence="8">Belongs to the UDP-glycosyltransferase family.</text>
</comment>
<accession>O22820</accession>
<accession>Q56XT4</accession>
<evidence type="ECO:0000250" key="1">
    <source>
        <dbReference type="UniProtKB" id="A0A0A1HA03"/>
    </source>
</evidence>
<evidence type="ECO:0000250" key="2">
    <source>
        <dbReference type="UniProtKB" id="P51094"/>
    </source>
</evidence>
<evidence type="ECO:0000269" key="3">
    <source>
    </source>
</evidence>
<evidence type="ECO:0000269" key="4">
    <source>
    </source>
</evidence>
<evidence type="ECO:0000269" key="5">
    <source>
    </source>
</evidence>
<evidence type="ECO:0000269" key="6">
    <source>
    </source>
</evidence>
<evidence type="ECO:0000303" key="7">
    <source>
    </source>
</evidence>
<evidence type="ECO:0000305" key="8"/>
<evidence type="ECO:0000312" key="9">
    <source>
        <dbReference type="Araport" id="AT2G43840"/>
    </source>
</evidence>
<evidence type="ECO:0000312" key="10">
    <source>
        <dbReference type="EMBL" id="AAB64022.1"/>
    </source>
</evidence>
<proteinExistence type="evidence at protein level"/>
<organism>
    <name type="scientific">Arabidopsis thaliana</name>
    <name type="common">Mouse-ear cress</name>
    <dbReference type="NCBI Taxonomy" id="3702"/>
    <lineage>
        <taxon>Eukaryota</taxon>
        <taxon>Viridiplantae</taxon>
        <taxon>Streptophyta</taxon>
        <taxon>Embryophyta</taxon>
        <taxon>Tracheophyta</taxon>
        <taxon>Spermatophyta</taxon>
        <taxon>Magnoliopsida</taxon>
        <taxon>eudicotyledons</taxon>
        <taxon>Gunneridae</taxon>
        <taxon>Pentapetalae</taxon>
        <taxon>rosids</taxon>
        <taxon>malvids</taxon>
        <taxon>Brassicales</taxon>
        <taxon>Brassicaceae</taxon>
        <taxon>Camelineae</taxon>
        <taxon>Arabidopsis</taxon>
    </lineage>
</organism>
<feature type="chain" id="PRO_0000409103" description="Flavonol 7-O-beta-glucosyltransferase UGT74F1">
    <location>
        <begin position="1"/>
        <end position="449"/>
    </location>
</feature>
<feature type="active site" description="Proton acceptor" evidence="1">
    <location>
        <position position="18"/>
    </location>
</feature>
<feature type="active site" description="Charge relay" evidence="1">
    <location>
        <position position="111"/>
    </location>
</feature>
<feature type="binding site" evidence="2">
    <location>
        <position position="18"/>
    </location>
    <ligand>
        <name>an anthocyanidin</name>
        <dbReference type="ChEBI" id="CHEBI:143576"/>
    </ligand>
</feature>
<feature type="binding site" evidence="1">
    <location>
        <position position="133"/>
    </location>
    <ligand>
        <name>UDP-alpha-D-glucose</name>
        <dbReference type="ChEBI" id="CHEBI:58885"/>
    </ligand>
</feature>
<feature type="binding site" evidence="1">
    <location>
        <position position="327"/>
    </location>
    <ligand>
        <name>UDP-alpha-D-glucose</name>
        <dbReference type="ChEBI" id="CHEBI:58885"/>
    </ligand>
</feature>
<feature type="binding site" evidence="1">
    <location>
        <position position="342"/>
    </location>
    <ligand>
        <name>UDP-alpha-D-glucose</name>
        <dbReference type="ChEBI" id="CHEBI:58885"/>
    </ligand>
</feature>
<feature type="binding site" evidence="1">
    <location>
        <position position="345"/>
    </location>
    <ligand>
        <name>UDP-alpha-D-glucose</name>
        <dbReference type="ChEBI" id="CHEBI:58885"/>
    </ligand>
</feature>
<feature type="binding site" evidence="1">
    <location>
        <position position="346"/>
    </location>
    <ligand>
        <name>UDP-alpha-D-glucose</name>
        <dbReference type="ChEBI" id="CHEBI:58885"/>
    </ligand>
</feature>
<feature type="binding site" evidence="1">
    <location>
        <position position="347"/>
    </location>
    <ligand>
        <name>UDP-alpha-D-glucose</name>
        <dbReference type="ChEBI" id="CHEBI:58885"/>
    </ligand>
</feature>
<feature type="binding site" evidence="1">
    <location>
        <position position="350"/>
    </location>
    <ligand>
        <name>UDP-alpha-D-glucose</name>
        <dbReference type="ChEBI" id="CHEBI:58885"/>
    </ligand>
</feature>
<feature type="binding site" evidence="1">
    <location>
        <position position="366"/>
    </location>
    <ligand>
        <name>UDP-alpha-D-glucose</name>
        <dbReference type="ChEBI" id="CHEBI:58885"/>
    </ligand>
</feature>
<feature type="binding site" evidence="1">
    <location>
        <position position="367"/>
    </location>
    <ligand>
        <name>UDP-alpha-D-glucose</name>
        <dbReference type="ChEBI" id="CHEBI:58885"/>
    </ligand>
</feature>
<keyword id="KW-0025">Alternative splicing</keyword>
<keyword id="KW-0328">Glycosyltransferase</keyword>
<keyword id="KW-1185">Reference proteome</keyword>
<keyword id="KW-0808">Transferase</keyword>
<protein>
    <recommendedName>
        <fullName evidence="8">Flavonol 7-O-beta-glucosyltransferase UGT74F1</fullName>
        <ecNumber evidence="5">2.4.1.237</ecNumber>
    </recommendedName>
    <alternativeName>
        <fullName evidence="7">UDP-glycosyltransferase 74F1</fullName>
    </alternativeName>
</protein>
<gene>
    <name evidence="7" type="primary">UGT74F1</name>
    <name evidence="9" type="ordered locus">At2g43840</name>
    <name evidence="10" type="ORF">F18O19.5</name>
</gene>
<reference key="1">
    <citation type="journal article" date="1999" name="Nature">
        <title>Sequence and analysis of chromosome 2 of the plant Arabidopsis thaliana.</title>
        <authorList>
            <person name="Lin X."/>
            <person name="Kaul S."/>
            <person name="Rounsley S.D."/>
            <person name="Shea T.P."/>
            <person name="Benito M.-I."/>
            <person name="Town C.D."/>
            <person name="Fujii C.Y."/>
            <person name="Mason T.M."/>
            <person name="Bowman C.L."/>
            <person name="Barnstead M.E."/>
            <person name="Feldblyum T.V."/>
            <person name="Buell C.R."/>
            <person name="Ketchum K.A."/>
            <person name="Lee J.J."/>
            <person name="Ronning C.M."/>
            <person name="Koo H.L."/>
            <person name="Moffat K.S."/>
            <person name="Cronin L.A."/>
            <person name="Shen M."/>
            <person name="Pai G."/>
            <person name="Van Aken S."/>
            <person name="Umayam L."/>
            <person name="Tallon L.J."/>
            <person name="Gill J.E."/>
            <person name="Adams M.D."/>
            <person name="Carrera A.J."/>
            <person name="Creasy T.H."/>
            <person name="Goodman H.M."/>
            <person name="Somerville C.R."/>
            <person name="Copenhaver G.P."/>
            <person name="Preuss D."/>
            <person name="Nierman W.C."/>
            <person name="White O."/>
            <person name="Eisen J.A."/>
            <person name="Salzberg S.L."/>
            <person name="Fraser C.M."/>
            <person name="Venter J.C."/>
        </authorList>
    </citation>
    <scope>NUCLEOTIDE SEQUENCE [LARGE SCALE GENOMIC DNA]</scope>
    <source>
        <strain>cv. Columbia</strain>
    </source>
</reference>
<reference key="2">
    <citation type="journal article" date="2017" name="Plant J.">
        <title>Araport11: a complete reannotation of the Arabidopsis thaliana reference genome.</title>
        <authorList>
            <person name="Cheng C.Y."/>
            <person name="Krishnakumar V."/>
            <person name="Chan A.P."/>
            <person name="Thibaud-Nissen F."/>
            <person name="Schobel S."/>
            <person name="Town C.D."/>
        </authorList>
    </citation>
    <scope>GENOME REANNOTATION</scope>
    <source>
        <strain>cv. Columbia</strain>
    </source>
</reference>
<reference key="3">
    <citation type="submission" date="2005-03" db="EMBL/GenBank/DDBJ databases">
        <title>Large-scale analysis of RIKEN Arabidopsis full-length (RAFL) cDNAs.</title>
        <authorList>
            <person name="Totoki Y."/>
            <person name="Seki M."/>
            <person name="Ishida J."/>
            <person name="Nakajima M."/>
            <person name="Enju A."/>
            <person name="Kamiya A."/>
            <person name="Narusaka M."/>
            <person name="Shin-i T."/>
            <person name="Nakagawa M."/>
            <person name="Sakamoto N."/>
            <person name="Oishi K."/>
            <person name="Kohara Y."/>
            <person name="Kobayashi M."/>
            <person name="Toyoda A."/>
            <person name="Sakaki Y."/>
            <person name="Sakurai T."/>
            <person name="Iida K."/>
            <person name="Akiyama K."/>
            <person name="Satou M."/>
            <person name="Toyoda T."/>
            <person name="Konagaya A."/>
            <person name="Carninci P."/>
            <person name="Kawai J."/>
            <person name="Hayashizaki Y."/>
            <person name="Shinozaki K."/>
        </authorList>
    </citation>
    <scope>NUCLEOTIDE SEQUENCE [LARGE SCALE MRNA] OF 19-449</scope>
    <source>
        <strain>cv. Columbia</strain>
    </source>
</reference>
<reference key="4">
    <citation type="journal article" date="2001" name="J. Biol. Chem.">
        <title>Phylogenetic analysis of the UDP-glycosyltransferase multigene family of Arabidopsis thaliana.</title>
        <authorList>
            <person name="Li Y."/>
            <person name="Baldauf S."/>
            <person name="Lim E.K."/>
            <person name="Bowles D.J."/>
        </authorList>
    </citation>
    <scope>GENE FAMILY</scope>
</reference>
<reference key="5">
    <citation type="journal article" date="2002" name="J. Biol. Chem.">
        <title>The activity of Arabidopsis glycosyltransferases toward salicylic acid, 4-hydroxybenzoic acid, and other benzoates.</title>
        <authorList>
            <person name="Lim E.K."/>
            <person name="Doucet C.J."/>
            <person name="Li Y."/>
            <person name="Elias L."/>
            <person name="Worrall D."/>
            <person name="Spencer S.P."/>
            <person name="Ross J."/>
            <person name="Bowles D.J."/>
        </authorList>
    </citation>
    <scope>FUNCTION</scope>
</reference>
<reference key="6">
    <citation type="journal article" date="2003" name="J. Biol. Chem.">
        <title>Glucose conjugation of anthranilate by the Arabidopsis UGT74F2 glucosyltransferase is required for tryptophan mutant blue fluorescence.</title>
        <authorList>
            <person name="Quiel J.A."/>
            <person name="Bender J."/>
        </authorList>
    </citation>
    <scope>FUNCTION</scope>
    <scope>BIOPHYSICOCHEMICAL PROPERTIES</scope>
</reference>
<reference key="7">
    <citation type="journal article" date="2004" name="Biotechnol. Bioeng.">
        <title>Arabidopsis glycosyltransferases as biocatalysts in fermentation for regioselective synthesis of diverse quercetin glucosides.</title>
        <authorList>
            <person name="Lim E.K."/>
            <person name="Ashford D.A."/>
            <person name="Hou B."/>
            <person name="Jackson R.G."/>
            <person name="Bowles D.J."/>
        </authorList>
    </citation>
    <scope>FUNCTION</scope>
    <scope>CATALYTIC ACTIVITY</scope>
</reference>
<reference key="8">
    <citation type="journal article" date="2008" name="J. Biol. Chem.">
        <title>Metabolism of the folate precursor p-aminobenzoate in plants: glucose ester formation and vacuolar storage.</title>
        <authorList>
            <person name="Eudes A."/>
            <person name="Bozzo G.G."/>
            <person name="Waller J.C."/>
            <person name="Naponelli V."/>
            <person name="Lim E.K."/>
            <person name="Bowles D.J."/>
            <person name="Gregory J.F. III"/>
            <person name="Hanson A.D."/>
        </authorList>
    </citation>
    <scope>FUNCTION</scope>
    <scope>BIOPHYSICOCHEMICAL PROPERTIES</scope>
</reference>
<sequence>MEKMRGHVLAVPFPSQGHITPIRQFCKRLHSKGFKTTHTLTTFIFNTIHLDPSSPISIATISDGYDQGGFSSAGSVPEYLQNFKTFGSKTVADIIRKHQSTDNPITCIVYDSFMPWALDLAMDFGLAAAPFFTQSCAVNYINYLSYINNGSLTLPIKDLPLLELQDLPTFVTPTGSHLAYFEMVLQQFTNFDKADFVLVNSFHDLDLHEEELLSKVCPVLTIGPTVPSMYLDQQIKSDNDYDLNLFDLKEAALCTDWLDKRPEGSVVYIAFGSMAKLSSEQMEEIASAISNFSYLWVVRASEESKLPPGFLETVDKDKSLVLKWSPQLQVLSNKAIGCFMTHCGWNSTMEGLSLGVPMVAMPQWTDQPMNAKYIQDVWKVGVRVKAEKESGICKREEIEFSIKEVMEGEKSKEMKENAGKWRDLAVKSLSEGGSTDININEFVSKIQIK</sequence>
<dbReference type="EC" id="2.4.1.237" evidence="5"/>
<dbReference type="EMBL" id="AC002333">
    <property type="protein sequence ID" value="AAB64022.1"/>
    <property type="molecule type" value="Genomic_DNA"/>
</dbReference>
<dbReference type="EMBL" id="CP002685">
    <property type="protein sequence ID" value="AEC10333.1"/>
    <property type="molecule type" value="Genomic_DNA"/>
</dbReference>
<dbReference type="EMBL" id="AK221589">
    <property type="protein sequence ID" value="BAD95102.1"/>
    <property type="molecule type" value="mRNA"/>
</dbReference>
<dbReference type="PIR" id="B84871">
    <property type="entry name" value="B84871"/>
</dbReference>
<dbReference type="RefSeq" id="NP_181912.1">
    <molecule id="O22820-1"/>
    <property type="nucleotide sequence ID" value="NM_129946.3"/>
</dbReference>
<dbReference type="SMR" id="O22820"/>
<dbReference type="FunCoup" id="O22820">
    <property type="interactions" value="102"/>
</dbReference>
<dbReference type="STRING" id="3702.O22820"/>
<dbReference type="CAZy" id="GT1">
    <property type="family name" value="Glycosyltransferase Family 1"/>
</dbReference>
<dbReference type="GlyGen" id="O22820">
    <property type="glycosylation" value="2 sites"/>
</dbReference>
<dbReference type="iPTMnet" id="O22820"/>
<dbReference type="PaxDb" id="3702-AT2G43840.1"/>
<dbReference type="ProteomicsDB" id="228645">
    <molecule id="O22820-1"/>
</dbReference>
<dbReference type="EnsemblPlants" id="AT2G43840.1">
    <molecule id="O22820-1"/>
    <property type="protein sequence ID" value="AT2G43840.1"/>
    <property type="gene ID" value="AT2G43840"/>
</dbReference>
<dbReference type="GeneID" id="818988"/>
<dbReference type="Gramene" id="AT2G43840.1">
    <molecule id="O22820-1"/>
    <property type="protein sequence ID" value="AT2G43840.1"/>
    <property type="gene ID" value="AT2G43840"/>
</dbReference>
<dbReference type="KEGG" id="ath:AT2G43840"/>
<dbReference type="Araport" id="AT2G43840"/>
<dbReference type="TAIR" id="AT2G43840">
    <property type="gene designation" value="UGT74F1"/>
</dbReference>
<dbReference type="eggNOG" id="KOG1192">
    <property type="taxonomic scope" value="Eukaryota"/>
</dbReference>
<dbReference type="InParanoid" id="O22820"/>
<dbReference type="PhylomeDB" id="O22820"/>
<dbReference type="PRO" id="PR:O22820"/>
<dbReference type="Proteomes" id="UP000006548">
    <property type="component" value="Chromosome 2"/>
</dbReference>
<dbReference type="ExpressionAtlas" id="O22820">
    <property type="expression patterns" value="baseline and differential"/>
</dbReference>
<dbReference type="GO" id="GO:0033836">
    <property type="term" value="F:flavonol 7-O-beta-glucosyltransferase activity"/>
    <property type="evidence" value="ECO:0007669"/>
    <property type="project" value="UniProtKB-EC"/>
</dbReference>
<dbReference type="GO" id="GO:0035251">
    <property type="term" value="F:UDP-glucosyltransferase activity"/>
    <property type="evidence" value="ECO:0007669"/>
    <property type="project" value="UniProtKB-ARBA"/>
</dbReference>
<dbReference type="CDD" id="cd03784">
    <property type="entry name" value="GT1_Gtf-like"/>
    <property type="match status" value="1"/>
</dbReference>
<dbReference type="FunFam" id="3.40.50.2000:FF:000019">
    <property type="entry name" value="Glycosyltransferase"/>
    <property type="match status" value="1"/>
</dbReference>
<dbReference type="FunFam" id="3.40.50.2000:FF:000057">
    <property type="entry name" value="Glycosyltransferase"/>
    <property type="match status" value="1"/>
</dbReference>
<dbReference type="Gene3D" id="3.40.50.2000">
    <property type="entry name" value="Glycogen Phosphorylase B"/>
    <property type="match status" value="2"/>
</dbReference>
<dbReference type="InterPro" id="IPR002213">
    <property type="entry name" value="UDP_glucos_trans"/>
</dbReference>
<dbReference type="InterPro" id="IPR035595">
    <property type="entry name" value="UDP_glycos_trans_CS"/>
</dbReference>
<dbReference type="PANTHER" id="PTHR11926:SF896">
    <property type="entry name" value="FLAVONOL 7-O-BETA-GLUCOSYLTRANSFERASE UGT74F1"/>
    <property type="match status" value="1"/>
</dbReference>
<dbReference type="PANTHER" id="PTHR11926">
    <property type="entry name" value="GLUCOSYL/GLUCURONOSYL TRANSFERASES"/>
    <property type="match status" value="1"/>
</dbReference>
<dbReference type="Pfam" id="PF00201">
    <property type="entry name" value="UDPGT"/>
    <property type="match status" value="1"/>
</dbReference>
<dbReference type="SUPFAM" id="SSF53756">
    <property type="entry name" value="UDP-Glycosyltransferase/glycogen phosphorylase"/>
    <property type="match status" value="1"/>
</dbReference>
<dbReference type="PROSITE" id="PS00375">
    <property type="entry name" value="UDPGT"/>
    <property type="match status" value="1"/>
</dbReference>